<evidence type="ECO:0000255" key="1">
    <source>
        <dbReference type="HAMAP-Rule" id="MF_00523"/>
    </source>
</evidence>
<keyword id="KW-0012">Acyltransferase</keyword>
<keyword id="KW-0441">Lipid A biosynthesis</keyword>
<keyword id="KW-0444">Lipid biosynthesis</keyword>
<keyword id="KW-0443">Lipid metabolism</keyword>
<keyword id="KW-1185">Reference proteome</keyword>
<keyword id="KW-0677">Repeat</keyword>
<keyword id="KW-0808">Transferase</keyword>
<comment type="function">
    <text evidence="1">Catalyzes the N-acylation of UDP-3-O-acylglucosamine using 3-hydroxyacyl-ACP as the acyl donor. Is involved in the biosynthesis of lipid A, a phosphorylated glycolipid that anchors the lipopolysaccharide to the outer membrane of the cell.</text>
</comment>
<comment type="catalytic activity">
    <reaction evidence="1">
        <text>a UDP-3-O-[(3R)-3-hydroxyacyl]-alpha-D-glucosamine + a (3R)-hydroxyacyl-[ACP] = a UDP-2-N,3-O-bis[(3R)-3-hydroxyacyl]-alpha-D-glucosamine + holo-[ACP] + H(+)</text>
        <dbReference type="Rhea" id="RHEA:53836"/>
        <dbReference type="Rhea" id="RHEA-COMP:9685"/>
        <dbReference type="Rhea" id="RHEA-COMP:9945"/>
        <dbReference type="ChEBI" id="CHEBI:15378"/>
        <dbReference type="ChEBI" id="CHEBI:64479"/>
        <dbReference type="ChEBI" id="CHEBI:78827"/>
        <dbReference type="ChEBI" id="CHEBI:137740"/>
        <dbReference type="ChEBI" id="CHEBI:137748"/>
        <dbReference type="EC" id="2.3.1.191"/>
    </reaction>
</comment>
<comment type="pathway">
    <text evidence="1">Bacterial outer membrane biogenesis; LPS lipid A biosynthesis.</text>
</comment>
<comment type="subunit">
    <text evidence="1">Homotrimer.</text>
</comment>
<comment type="similarity">
    <text evidence="1">Belongs to the transferase hexapeptide repeat family. LpxD subfamily.</text>
</comment>
<reference key="1">
    <citation type="journal article" date="2006" name="Nat. Biotechnol.">
        <title>Genome sequence of the bioplastic-producing 'Knallgas' bacterium Ralstonia eutropha H16.</title>
        <authorList>
            <person name="Pohlmann A."/>
            <person name="Fricke W.F."/>
            <person name="Reinecke F."/>
            <person name="Kusian B."/>
            <person name="Liesegang H."/>
            <person name="Cramm R."/>
            <person name="Eitinger T."/>
            <person name="Ewering C."/>
            <person name="Poetter M."/>
            <person name="Schwartz E."/>
            <person name="Strittmatter A."/>
            <person name="Voss I."/>
            <person name="Gottschalk G."/>
            <person name="Steinbuechel A."/>
            <person name="Friedrich B."/>
            <person name="Bowien B."/>
        </authorList>
    </citation>
    <scope>NUCLEOTIDE SEQUENCE [LARGE SCALE GENOMIC DNA]</scope>
    <source>
        <strain>ATCC 17699 / DSM 428 / KCTC 22496 / NCIMB 10442 / H16 / Stanier 337</strain>
    </source>
</reference>
<proteinExistence type="inferred from homology"/>
<name>LPXD_CUPNH</name>
<organism>
    <name type="scientific">Cupriavidus necator (strain ATCC 17699 / DSM 428 / KCTC 22496 / NCIMB 10442 / H16 / Stanier 337)</name>
    <name type="common">Ralstonia eutropha</name>
    <dbReference type="NCBI Taxonomy" id="381666"/>
    <lineage>
        <taxon>Bacteria</taxon>
        <taxon>Pseudomonadati</taxon>
        <taxon>Pseudomonadota</taxon>
        <taxon>Betaproteobacteria</taxon>
        <taxon>Burkholderiales</taxon>
        <taxon>Burkholderiaceae</taxon>
        <taxon>Cupriavidus</taxon>
    </lineage>
</organism>
<accession>Q0KA26</accession>
<gene>
    <name evidence="1" type="primary">lpxD</name>
    <name type="ordered locus">H16_A2045</name>
</gene>
<feature type="chain" id="PRO_1000050956" description="UDP-3-O-acylglucosamine N-acyltransferase">
    <location>
        <begin position="1"/>
        <end position="363"/>
    </location>
</feature>
<feature type="active site" description="Proton acceptor" evidence="1">
    <location>
        <position position="252"/>
    </location>
</feature>
<dbReference type="EC" id="2.3.1.191" evidence="1"/>
<dbReference type="EMBL" id="AM260479">
    <property type="protein sequence ID" value="CAJ93145.1"/>
    <property type="molecule type" value="Genomic_DNA"/>
</dbReference>
<dbReference type="RefSeq" id="WP_010809591.1">
    <property type="nucleotide sequence ID" value="NZ_CP039287.1"/>
</dbReference>
<dbReference type="SMR" id="Q0KA26"/>
<dbReference type="STRING" id="381666.H16_A2045"/>
<dbReference type="KEGG" id="reh:H16_A2045"/>
<dbReference type="eggNOG" id="COG1044">
    <property type="taxonomic scope" value="Bacteria"/>
</dbReference>
<dbReference type="HOGENOM" id="CLU_049865_0_1_4"/>
<dbReference type="OrthoDB" id="9784739at2"/>
<dbReference type="UniPathway" id="UPA00973"/>
<dbReference type="Proteomes" id="UP000008210">
    <property type="component" value="Chromosome 1"/>
</dbReference>
<dbReference type="GO" id="GO:0016020">
    <property type="term" value="C:membrane"/>
    <property type="evidence" value="ECO:0007669"/>
    <property type="project" value="GOC"/>
</dbReference>
<dbReference type="GO" id="GO:0016410">
    <property type="term" value="F:N-acyltransferase activity"/>
    <property type="evidence" value="ECO:0007669"/>
    <property type="project" value="InterPro"/>
</dbReference>
<dbReference type="GO" id="GO:0009245">
    <property type="term" value="P:lipid A biosynthetic process"/>
    <property type="evidence" value="ECO:0007669"/>
    <property type="project" value="UniProtKB-UniRule"/>
</dbReference>
<dbReference type="CDD" id="cd03352">
    <property type="entry name" value="LbH_LpxD"/>
    <property type="match status" value="1"/>
</dbReference>
<dbReference type="Gene3D" id="2.160.10.10">
    <property type="entry name" value="Hexapeptide repeat proteins"/>
    <property type="match status" value="1"/>
</dbReference>
<dbReference type="Gene3D" id="3.40.1390.10">
    <property type="entry name" value="MurE/MurF, N-terminal domain"/>
    <property type="match status" value="1"/>
</dbReference>
<dbReference type="HAMAP" id="MF_00523">
    <property type="entry name" value="LpxD"/>
    <property type="match status" value="1"/>
</dbReference>
<dbReference type="InterPro" id="IPR001451">
    <property type="entry name" value="Hexapep"/>
</dbReference>
<dbReference type="InterPro" id="IPR007691">
    <property type="entry name" value="LpxD"/>
</dbReference>
<dbReference type="InterPro" id="IPR011004">
    <property type="entry name" value="Trimer_LpxA-like_sf"/>
</dbReference>
<dbReference type="InterPro" id="IPR020573">
    <property type="entry name" value="UDP_GlcNAc_AcTrfase_non-rep"/>
</dbReference>
<dbReference type="NCBIfam" id="TIGR01853">
    <property type="entry name" value="lipid_A_lpxD"/>
    <property type="match status" value="1"/>
</dbReference>
<dbReference type="NCBIfam" id="NF002060">
    <property type="entry name" value="PRK00892.1"/>
    <property type="match status" value="1"/>
</dbReference>
<dbReference type="PANTHER" id="PTHR43378">
    <property type="entry name" value="UDP-3-O-ACYLGLUCOSAMINE N-ACYLTRANSFERASE"/>
    <property type="match status" value="1"/>
</dbReference>
<dbReference type="PANTHER" id="PTHR43378:SF2">
    <property type="entry name" value="UDP-3-O-ACYLGLUCOSAMINE N-ACYLTRANSFERASE 1, MITOCHONDRIAL-RELATED"/>
    <property type="match status" value="1"/>
</dbReference>
<dbReference type="Pfam" id="PF00132">
    <property type="entry name" value="Hexapep"/>
    <property type="match status" value="2"/>
</dbReference>
<dbReference type="Pfam" id="PF04613">
    <property type="entry name" value="LpxD"/>
    <property type="match status" value="1"/>
</dbReference>
<dbReference type="SUPFAM" id="SSF51161">
    <property type="entry name" value="Trimeric LpxA-like enzymes"/>
    <property type="match status" value="1"/>
</dbReference>
<dbReference type="PROSITE" id="PS00101">
    <property type="entry name" value="HEXAPEP_TRANSFERASES"/>
    <property type="match status" value="1"/>
</dbReference>
<protein>
    <recommendedName>
        <fullName evidence="1">UDP-3-O-acylglucosamine N-acyltransferase</fullName>
        <ecNumber evidence="1">2.3.1.191</ecNumber>
    </recommendedName>
</protein>
<sequence>MQTPTLGQLATENGAQVVGDPDLAIVGLAPLDQAGPGELSFLSNPLYLQQALDSQAGAVIVSAADLERVRAEGRADGRNWLVARNPYVCFARVAQRFDRAANTDTRTGIDPRATVAPDAVVPASCYIGPNVVIERGARLGERVRILANGYVGAQAEIGDDSLLYANVSVYHDCVVGARAILHSGVVIGADGFGFAPDIGATGVEYVKIPQTGRAVLGNDVEVGANTAIDRGAMADTVIEDGCKIDNQVQIAHNVRVGAHTVIAGCAAVSGSTRIGRFCVIGGAANFSGHLNIADRTTVSGGTSITKSITKPGGHFTSVFPFLPHGEWERNAAIVRGLTRLRERVVALERRLRGQAAGSQPSQD</sequence>